<feature type="chain" id="PRO_1000087104" description="Large ribosomal subunit protein uL13">
    <location>
        <begin position="1"/>
        <end position="142"/>
    </location>
</feature>
<sequence length="142" mass="16019">MKTFTAKPETVKRDWYVVDATGKTLGRLATELARRLRGKHKAEYTPHVDTGDYIIVLNADKVAVTGNKRTDKVYYHHTGHIGGIKQATFEEMIARRPERVIEIAVKGMLPKGPLGRAMFRKLKVYAGNEHNHAAQQPQVLDI</sequence>
<name>RL13_SALAR</name>
<accession>A9MNY0</accession>
<gene>
    <name evidence="1" type="primary">rplM</name>
    <name type="ordered locus">SARI_04279</name>
</gene>
<organism>
    <name type="scientific">Salmonella arizonae (strain ATCC BAA-731 / CDC346-86 / RSK2980)</name>
    <dbReference type="NCBI Taxonomy" id="41514"/>
    <lineage>
        <taxon>Bacteria</taxon>
        <taxon>Pseudomonadati</taxon>
        <taxon>Pseudomonadota</taxon>
        <taxon>Gammaproteobacteria</taxon>
        <taxon>Enterobacterales</taxon>
        <taxon>Enterobacteriaceae</taxon>
        <taxon>Salmonella</taxon>
    </lineage>
</organism>
<reference key="1">
    <citation type="submission" date="2007-11" db="EMBL/GenBank/DDBJ databases">
        <authorList>
            <consortium name="The Salmonella enterica serovar Arizonae Genome Sequencing Project"/>
            <person name="McClelland M."/>
            <person name="Sanderson E.K."/>
            <person name="Porwollik S."/>
            <person name="Spieth J."/>
            <person name="Clifton W.S."/>
            <person name="Fulton R."/>
            <person name="Chunyan W."/>
            <person name="Wollam A."/>
            <person name="Shah N."/>
            <person name="Pepin K."/>
            <person name="Bhonagiri V."/>
            <person name="Nash W."/>
            <person name="Johnson M."/>
            <person name="Thiruvilangam P."/>
            <person name="Wilson R."/>
        </authorList>
    </citation>
    <scope>NUCLEOTIDE SEQUENCE [LARGE SCALE GENOMIC DNA]</scope>
    <source>
        <strain>ATCC BAA-731 / CDC346-86 / RSK2980</strain>
    </source>
</reference>
<evidence type="ECO:0000255" key="1">
    <source>
        <dbReference type="HAMAP-Rule" id="MF_01366"/>
    </source>
</evidence>
<evidence type="ECO:0000305" key="2"/>
<dbReference type="EMBL" id="CP000880">
    <property type="protein sequence ID" value="ABX24062.1"/>
    <property type="molecule type" value="Genomic_DNA"/>
</dbReference>
<dbReference type="SMR" id="A9MNY0"/>
<dbReference type="STRING" id="41514.SARI_04279"/>
<dbReference type="KEGG" id="ses:SARI_04279"/>
<dbReference type="HOGENOM" id="CLU_082184_2_2_6"/>
<dbReference type="Proteomes" id="UP000002084">
    <property type="component" value="Chromosome"/>
</dbReference>
<dbReference type="GO" id="GO:0022625">
    <property type="term" value="C:cytosolic large ribosomal subunit"/>
    <property type="evidence" value="ECO:0007669"/>
    <property type="project" value="TreeGrafter"/>
</dbReference>
<dbReference type="GO" id="GO:0003729">
    <property type="term" value="F:mRNA binding"/>
    <property type="evidence" value="ECO:0007669"/>
    <property type="project" value="TreeGrafter"/>
</dbReference>
<dbReference type="GO" id="GO:0003735">
    <property type="term" value="F:structural constituent of ribosome"/>
    <property type="evidence" value="ECO:0007669"/>
    <property type="project" value="InterPro"/>
</dbReference>
<dbReference type="GO" id="GO:0017148">
    <property type="term" value="P:negative regulation of translation"/>
    <property type="evidence" value="ECO:0007669"/>
    <property type="project" value="TreeGrafter"/>
</dbReference>
<dbReference type="GO" id="GO:0006412">
    <property type="term" value="P:translation"/>
    <property type="evidence" value="ECO:0007669"/>
    <property type="project" value="UniProtKB-UniRule"/>
</dbReference>
<dbReference type="CDD" id="cd00392">
    <property type="entry name" value="Ribosomal_L13"/>
    <property type="match status" value="1"/>
</dbReference>
<dbReference type="FunFam" id="3.90.1180.10:FF:000001">
    <property type="entry name" value="50S ribosomal protein L13"/>
    <property type="match status" value="1"/>
</dbReference>
<dbReference type="Gene3D" id="3.90.1180.10">
    <property type="entry name" value="Ribosomal protein L13"/>
    <property type="match status" value="1"/>
</dbReference>
<dbReference type="HAMAP" id="MF_01366">
    <property type="entry name" value="Ribosomal_uL13"/>
    <property type="match status" value="1"/>
</dbReference>
<dbReference type="InterPro" id="IPR005822">
    <property type="entry name" value="Ribosomal_uL13"/>
</dbReference>
<dbReference type="InterPro" id="IPR005823">
    <property type="entry name" value="Ribosomal_uL13_bac-type"/>
</dbReference>
<dbReference type="InterPro" id="IPR023563">
    <property type="entry name" value="Ribosomal_uL13_CS"/>
</dbReference>
<dbReference type="InterPro" id="IPR036899">
    <property type="entry name" value="Ribosomal_uL13_sf"/>
</dbReference>
<dbReference type="NCBIfam" id="TIGR01066">
    <property type="entry name" value="rplM_bact"/>
    <property type="match status" value="1"/>
</dbReference>
<dbReference type="PANTHER" id="PTHR11545:SF2">
    <property type="entry name" value="LARGE RIBOSOMAL SUBUNIT PROTEIN UL13M"/>
    <property type="match status" value="1"/>
</dbReference>
<dbReference type="PANTHER" id="PTHR11545">
    <property type="entry name" value="RIBOSOMAL PROTEIN L13"/>
    <property type="match status" value="1"/>
</dbReference>
<dbReference type="Pfam" id="PF00572">
    <property type="entry name" value="Ribosomal_L13"/>
    <property type="match status" value="1"/>
</dbReference>
<dbReference type="PIRSF" id="PIRSF002181">
    <property type="entry name" value="Ribosomal_L13"/>
    <property type="match status" value="1"/>
</dbReference>
<dbReference type="SUPFAM" id="SSF52161">
    <property type="entry name" value="Ribosomal protein L13"/>
    <property type="match status" value="1"/>
</dbReference>
<dbReference type="PROSITE" id="PS00783">
    <property type="entry name" value="RIBOSOMAL_L13"/>
    <property type="match status" value="1"/>
</dbReference>
<proteinExistence type="inferred from homology"/>
<keyword id="KW-1185">Reference proteome</keyword>
<keyword id="KW-0687">Ribonucleoprotein</keyword>
<keyword id="KW-0689">Ribosomal protein</keyword>
<comment type="function">
    <text evidence="1">This protein is one of the early assembly proteins of the 50S ribosomal subunit, although it is not seen to bind rRNA by itself. It is important during the early stages of 50S assembly.</text>
</comment>
<comment type="subunit">
    <text evidence="1">Part of the 50S ribosomal subunit.</text>
</comment>
<comment type="similarity">
    <text evidence="1">Belongs to the universal ribosomal protein uL13 family.</text>
</comment>
<protein>
    <recommendedName>
        <fullName evidence="1">Large ribosomal subunit protein uL13</fullName>
    </recommendedName>
    <alternativeName>
        <fullName evidence="2">50S ribosomal protein L13</fullName>
    </alternativeName>
</protein>